<proteinExistence type="evidence at protein level"/>
<evidence type="ECO:0000250" key="1">
    <source>
        <dbReference type="UniProtKB" id="O87198"/>
    </source>
</evidence>
<evidence type="ECO:0000255" key="2">
    <source>
        <dbReference type="PROSITE-ProRule" id="PRU01151"/>
    </source>
</evidence>
<evidence type="ECO:0000256" key="3">
    <source>
        <dbReference type="SAM" id="MobiDB-lite"/>
    </source>
</evidence>
<evidence type="ECO:0000269" key="4">
    <source>
    </source>
</evidence>
<evidence type="ECO:0000305" key="5"/>
<evidence type="ECO:0007744" key="6">
    <source>
    </source>
</evidence>
<evidence type="ECO:0007744" key="7">
    <source>
    </source>
</evidence>
<evidence type="ECO:0007744" key="8">
    <source>
    </source>
</evidence>
<accession>P48570</accession>
<accession>D6VRH0</accession>
<name>HOSC_YEAST</name>
<gene>
    <name type="primary">LYS20</name>
    <name type="ordered locus">YDL182W</name>
    <name type="ORF">D1298</name>
</gene>
<reference key="1">
    <citation type="journal article" date="1995" name="Yeast">
        <title>New open reading frames, one of which is similar to the nifV gene of Azotobacter vinelandii, found on a 12.5 kbp fragment of chromosome IV of Saccharomyces cerevisiae.</title>
        <authorList>
            <person name="Verhasselt P."/>
            <person name="Voet M."/>
            <person name="Volckaert G."/>
        </authorList>
    </citation>
    <scope>NUCLEOTIDE SEQUENCE [GENOMIC DNA]</scope>
    <source>
        <strain>ATCC 96604 / S288c / FY1679</strain>
    </source>
</reference>
<reference key="2">
    <citation type="journal article" date="1997" name="Nature">
        <title>The nucleotide sequence of Saccharomyces cerevisiae chromosome IV.</title>
        <authorList>
            <person name="Jacq C."/>
            <person name="Alt-Moerbe J."/>
            <person name="Andre B."/>
            <person name="Arnold W."/>
            <person name="Bahr A."/>
            <person name="Ballesta J.P.G."/>
            <person name="Bargues M."/>
            <person name="Baron L."/>
            <person name="Becker A."/>
            <person name="Biteau N."/>
            <person name="Bloecker H."/>
            <person name="Blugeon C."/>
            <person name="Boskovic J."/>
            <person name="Brandt P."/>
            <person name="Brueckner M."/>
            <person name="Buitrago M.J."/>
            <person name="Coster F."/>
            <person name="Delaveau T."/>
            <person name="del Rey F."/>
            <person name="Dujon B."/>
            <person name="Eide L.G."/>
            <person name="Garcia-Cantalejo J.M."/>
            <person name="Goffeau A."/>
            <person name="Gomez-Peris A."/>
            <person name="Granotier C."/>
            <person name="Hanemann V."/>
            <person name="Hankeln T."/>
            <person name="Hoheisel J.D."/>
            <person name="Jaeger W."/>
            <person name="Jimenez A."/>
            <person name="Jonniaux J.-L."/>
            <person name="Kraemer C."/>
            <person name="Kuester H."/>
            <person name="Laamanen P."/>
            <person name="Legros Y."/>
            <person name="Louis E.J."/>
            <person name="Moeller-Rieker S."/>
            <person name="Monnet A."/>
            <person name="Moro M."/>
            <person name="Mueller-Auer S."/>
            <person name="Nussbaumer B."/>
            <person name="Paricio N."/>
            <person name="Paulin L."/>
            <person name="Perea J."/>
            <person name="Perez-Alonso M."/>
            <person name="Perez-Ortin J.E."/>
            <person name="Pohl T.M."/>
            <person name="Prydz H."/>
            <person name="Purnelle B."/>
            <person name="Rasmussen S.W."/>
            <person name="Remacha M.A."/>
            <person name="Revuelta J.L."/>
            <person name="Rieger M."/>
            <person name="Salom D."/>
            <person name="Saluz H.P."/>
            <person name="Saiz J.E."/>
            <person name="Saren A.-M."/>
            <person name="Schaefer M."/>
            <person name="Scharfe M."/>
            <person name="Schmidt E.R."/>
            <person name="Schneider C."/>
            <person name="Scholler P."/>
            <person name="Schwarz S."/>
            <person name="Soler-Mira A."/>
            <person name="Urrestarazu L.A."/>
            <person name="Verhasselt P."/>
            <person name="Vissers S."/>
            <person name="Voet M."/>
            <person name="Volckaert G."/>
            <person name="Wagner G."/>
            <person name="Wambutt R."/>
            <person name="Wedler E."/>
            <person name="Wedler H."/>
            <person name="Woelfl S."/>
            <person name="Harris D.E."/>
            <person name="Bowman S."/>
            <person name="Brown D."/>
            <person name="Churcher C.M."/>
            <person name="Connor R."/>
            <person name="Dedman K."/>
            <person name="Gentles S."/>
            <person name="Hamlin N."/>
            <person name="Hunt S."/>
            <person name="Jones L."/>
            <person name="McDonald S."/>
            <person name="Murphy L.D."/>
            <person name="Niblett D."/>
            <person name="Odell C."/>
            <person name="Oliver K."/>
            <person name="Rajandream M.A."/>
            <person name="Richards C."/>
            <person name="Shore L."/>
            <person name="Walsh S.V."/>
            <person name="Barrell B.G."/>
            <person name="Dietrich F.S."/>
            <person name="Mulligan J.T."/>
            <person name="Allen E."/>
            <person name="Araujo R."/>
            <person name="Aviles E."/>
            <person name="Berno A."/>
            <person name="Carpenter J."/>
            <person name="Chen E."/>
            <person name="Cherry J.M."/>
            <person name="Chung E."/>
            <person name="Duncan M."/>
            <person name="Hunicke-Smith S."/>
            <person name="Hyman R.W."/>
            <person name="Komp C."/>
            <person name="Lashkari D."/>
            <person name="Lew H."/>
            <person name="Lin D."/>
            <person name="Mosedale D."/>
            <person name="Nakahara K."/>
            <person name="Namath A."/>
            <person name="Oefner P."/>
            <person name="Oh C."/>
            <person name="Petel F.X."/>
            <person name="Roberts D."/>
            <person name="Schramm S."/>
            <person name="Schroeder M."/>
            <person name="Shogren T."/>
            <person name="Shroff N."/>
            <person name="Winant A."/>
            <person name="Yelton M.A."/>
            <person name="Botstein D."/>
            <person name="Davis R.W."/>
            <person name="Johnston M."/>
            <person name="Andrews S."/>
            <person name="Brinkman R."/>
            <person name="Cooper J."/>
            <person name="Ding H."/>
            <person name="Du Z."/>
            <person name="Favello A."/>
            <person name="Fulton L."/>
            <person name="Gattung S."/>
            <person name="Greco T."/>
            <person name="Hallsworth K."/>
            <person name="Hawkins J."/>
            <person name="Hillier L.W."/>
            <person name="Jier M."/>
            <person name="Johnson D."/>
            <person name="Johnston L."/>
            <person name="Kirsten J."/>
            <person name="Kucaba T."/>
            <person name="Langston Y."/>
            <person name="Latreille P."/>
            <person name="Le T."/>
            <person name="Mardis E."/>
            <person name="Menezes S."/>
            <person name="Miller N."/>
            <person name="Nhan M."/>
            <person name="Pauley A."/>
            <person name="Peluso D."/>
            <person name="Rifkin L."/>
            <person name="Riles L."/>
            <person name="Taich A."/>
            <person name="Trevaskis E."/>
            <person name="Vignati D."/>
            <person name="Wilcox L."/>
            <person name="Wohldman P."/>
            <person name="Vaudin M."/>
            <person name="Wilson R."/>
            <person name="Waterston R."/>
            <person name="Albermann K."/>
            <person name="Hani J."/>
            <person name="Heumann K."/>
            <person name="Kleine K."/>
            <person name="Mewes H.-W."/>
            <person name="Zollner A."/>
            <person name="Zaccaria P."/>
        </authorList>
    </citation>
    <scope>NUCLEOTIDE SEQUENCE [LARGE SCALE GENOMIC DNA]</scope>
    <source>
        <strain>ATCC 204508 / S288c</strain>
    </source>
</reference>
<reference key="3">
    <citation type="journal article" date="2014" name="G3 (Bethesda)">
        <title>The reference genome sequence of Saccharomyces cerevisiae: Then and now.</title>
        <authorList>
            <person name="Engel S.R."/>
            <person name="Dietrich F.S."/>
            <person name="Fisk D.G."/>
            <person name="Binkley G."/>
            <person name="Balakrishnan R."/>
            <person name="Costanzo M.C."/>
            <person name="Dwight S.S."/>
            <person name="Hitz B.C."/>
            <person name="Karra K."/>
            <person name="Nash R.S."/>
            <person name="Weng S."/>
            <person name="Wong E.D."/>
            <person name="Lloyd P."/>
            <person name="Skrzypek M.S."/>
            <person name="Miyasato S.R."/>
            <person name="Simison M."/>
            <person name="Cherry J.M."/>
        </authorList>
    </citation>
    <scope>GENOME REANNOTATION</scope>
    <source>
        <strain>ATCC 204508 / S288c</strain>
    </source>
</reference>
<reference key="4">
    <citation type="journal article" date="1996" name="Yeast">
        <title>Identification of a gene encoding a homocitrate synthase isoenzyme of Saccharomyces cerevisiae.</title>
        <authorList>
            <person name="Ramos F."/>
            <person name="Verhasselt P."/>
            <person name="Feller A."/>
            <person name="Peeters P."/>
            <person name="Wach A."/>
            <person name="Dubois E."/>
            <person name="Volckaert G."/>
        </authorList>
    </citation>
    <scope>CHARACTERIZATION</scope>
</reference>
<reference key="5">
    <citation type="journal article" date="2003" name="Nature">
        <title>Global analysis of protein expression in yeast.</title>
        <authorList>
            <person name="Ghaemmaghami S."/>
            <person name="Huh W.-K."/>
            <person name="Bower K."/>
            <person name="Howson R.W."/>
            <person name="Belle A."/>
            <person name="Dephoure N."/>
            <person name="O'Shea E.K."/>
            <person name="Weissman J.S."/>
        </authorList>
    </citation>
    <scope>LEVEL OF PROTEIN EXPRESSION [LARGE SCALE ANALYSIS]</scope>
</reference>
<reference key="6">
    <citation type="journal article" date="2007" name="J. Proteome Res.">
        <title>Large-scale phosphorylation analysis of alpha-factor-arrested Saccharomyces cerevisiae.</title>
        <authorList>
            <person name="Li X."/>
            <person name="Gerber S.A."/>
            <person name="Rudner A.D."/>
            <person name="Beausoleil S.A."/>
            <person name="Haas W."/>
            <person name="Villen J."/>
            <person name="Elias J.E."/>
            <person name="Gygi S.P."/>
        </authorList>
    </citation>
    <scope>PHOSPHORYLATION [LARGE SCALE ANALYSIS] AT THR-396</scope>
    <scope>IDENTIFICATION BY MASS SPECTROMETRY [LARGE SCALE ANALYSIS]</scope>
    <source>
        <strain>ADR376</strain>
    </source>
</reference>
<reference key="7">
    <citation type="journal article" date="2007" name="Proc. Natl. Acad. Sci. U.S.A.">
        <title>Analysis of phosphorylation sites on proteins from Saccharomyces cerevisiae by electron transfer dissociation (ETD) mass spectrometry.</title>
        <authorList>
            <person name="Chi A."/>
            <person name="Huttenhower C."/>
            <person name="Geer L.Y."/>
            <person name="Coon J.J."/>
            <person name="Syka J.E.P."/>
            <person name="Bai D.L."/>
            <person name="Shabanowitz J."/>
            <person name="Burke D.J."/>
            <person name="Troyanskaya O.G."/>
            <person name="Hunt D.F."/>
        </authorList>
    </citation>
    <scope>PHOSPHORYLATION [LARGE SCALE ANALYSIS] AT SER-401</scope>
    <scope>IDENTIFICATION BY MASS SPECTROMETRY [LARGE SCALE ANALYSIS]</scope>
</reference>
<reference key="8">
    <citation type="journal article" date="2008" name="Mol. Cell. Proteomics">
        <title>A multidimensional chromatography technology for in-depth phosphoproteome analysis.</title>
        <authorList>
            <person name="Albuquerque C.P."/>
            <person name="Smolka M.B."/>
            <person name="Payne S.H."/>
            <person name="Bafna V."/>
            <person name="Eng J."/>
            <person name="Zhou H."/>
        </authorList>
    </citation>
    <scope>IDENTIFICATION BY MASS SPECTROMETRY [LARGE SCALE ANALYSIS]</scope>
</reference>
<reference key="9">
    <citation type="journal article" date="2009" name="Science">
        <title>Global analysis of Cdk1 substrate phosphorylation sites provides insights into evolution.</title>
        <authorList>
            <person name="Holt L.J."/>
            <person name="Tuch B.B."/>
            <person name="Villen J."/>
            <person name="Johnson A.D."/>
            <person name="Gygi S.P."/>
            <person name="Morgan D.O."/>
        </authorList>
    </citation>
    <scope>PHOSPHORYLATION [LARGE SCALE ANALYSIS] AT SER-385; THR-396 AND SER-410</scope>
    <scope>IDENTIFICATION BY MASS SPECTROMETRY [LARGE SCALE ANALYSIS]</scope>
</reference>
<keyword id="KW-0028">Amino-acid biosynthesis</keyword>
<keyword id="KW-0963">Cytoplasm</keyword>
<keyword id="KW-0457">Lysine biosynthesis</keyword>
<keyword id="KW-0460">Magnesium</keyword>
<keyword id="KW-0464">Manganese</keyword>
<keyword id="KW-0479">Metal-binding</keyword>
<keyword id="KW-0597">Phosphoprotein</keyword>
<keyword id="KW-1185">Reference proteome</keyword>
<keyword id="KW-0808">Transferase</keyword>
<sequence length="428" mass="47099">MTAAKPNPYAAKPGDYLSNVNNFQLIDSTLREGEQFANAFFDTEKKIEIARALDDFGVDYIELTSPVASEQSRKDCEAICKLGLKAKILTHIRCHMDDAKVAVETGVDGVDVVIGTSKFLRQYSHGKDMNYIAKSAVEVIEFVKSKGIEIRFSSEDSFRSDLVDLLNIYKTVDKIGVNRVGIADTVGCANPRQVYELIRTLKSVVSCDIECHFHNDTGCAIANAYTALEGGARLIDVSVLGIGERNGITPLGGLMARMIVAAPDYVKSKYKLHKIRDIENLVADAVEVNIPFNNPITGFCAFTHKAGIHAKAILANPSTYEILDPHDFGMKRYIHFANRLTGWNAIKARVDQLNLNLTDDQIKEVTAKIKKLGDVRSLNIDDVDSIIKNFHAEVSTPQVLSAKKNKKNDSDVPELATIPAAKRTKPSA</sequence>
<dbReference type="EC" id="2.3.3.14" evidence="1"/>
<dbReference type="EMBL" id="X83276">
    <property type="protein sequence ID" value="CAA58264.1"/>
    <property type="molecule type" value="Genomic_DNA"/>
</dbReference>
<dbReference type="EMBL" id="Z67750">
    <property type="protein sequence ID" value="CAA91564.1"/>
    <property type="molecule type" value="Genomic_DNA"/>
</dbReference>
<dbReference type="EMBL" id="Z74230">
    <property type="protein sequence ID" value="CAA98757.1"/>
    <property type="molecule type" value="Genomic_DNA"/>
</dbReference>
<dbReference type="EMBL" id="Z74229">
    <property type="protein sequence ID" value="CAA98756.1"/>
    <property type="molecule type" value="Genomic_DNA"/>
</dbReference>
<dbReference type="EMBL" id="BK006938">
    <property type="protein sequence ID" value="DAA11680.1"/>
    <property type="molecule type" value="Genomic_DNA"/>
</dbReference>
<dbReference type="PIR" id="S58735">
    <property type="entry name" value="S58735"/>
</dbReference>
<dbReference type="RefSeq" id="NP_010099.1">
    <property type="nucleotide sequence ID" value="NM_001180242.1"/>
</dbReference>
<dbReference type="SMR" id="P48570"/>
<dbReference type="BioGRID" id="31862">
    <property type="interactions" value="197"/>
</dbReference>
<dbReference type="FunCoup" id="P48570">
    <property type="interactions" value="725"/>
</dbReference>
<dbReference type="IntAct" id="P48570">
    <property type="interactions" value="35"/>
</dbReference>
<dbReference type="MINT" id="P48570"/>
<dbReference type="STRING" id="4932.YDL182W"/>
<dbReference type="MoonProt" id="P48570"/>
<dbReference type="iPTMnet" id="P48570"/>
<dbReference type="PaxDb" id="4932-YDL182W"/>
<dbReference type="PeptideAtlas" id="P48570"/>
<dbReference type="EnsemblFungi" id="YDL182W_mRNA">
    <property type="protein sequence ID" value="YDL182W"/>
    <property type="gene ID" value="YDL182W"/>
</dbReference>
<dbReference type="GeneID" id="851346"/>
<dbReference type="KEGG" id="sce:YDL182W"/>
<dbReference type="AGR" id="SGD:S000002341"/>
<dbReference type="SGD" id="S000002341">
    <property type="gene designation" value="LYS20"/>
</dbReference>
<dbReference type="VEuPathDB" id="FungiDB:YDL182W"/>
<dbReference type="eggNOG" id="KOG2367">
    <property type="taxonomic scope" value="Eukaryota"/>
</dbReference>
<dbReference type="GeneTree" id="ENSGT00940000176819"/>
<dbReference type="HOGENOM" id="CLU_022158_2_2_1"/>
<dbReference type="InParanoid" id="P48570"/>
<dbReference type="OMA" id="NMFAHES"/>
<dbReference type="OrthoDB" id="2015253at2759"/>
<dbReference type="BioCyc" id="MetaCyc:YDL182W-MONOMER"/>
<dbReference type="BioCyc" id="YEAST:YDL182W-MONOMER"/>
<dbReference type="BRENDA" id="2.3.3.14">
    <property type="organism ID" value="984"/>
</dbReference>
<dbReference type="SABIO-RK" id="P48570"/>
<dbReference type="UniPathway" id="UPA00033">
    <property type="reaction ID" value="UER00028"/>
</dbReference>
<dbReference type="BioGRID-ORCS" id="851346">
    <property type="hits" value="1 hit in 10 CRISPR screens"/>
</dbReference>
<dbReference type="PRO" id="PR:P48570"/>
<dbReference type="Proteomes" id="UP000002311">
    <property type="component" value="Chromosome IV"/>
</dbReference>
<dbReference type="RNAct" id="P48570">
    <property type="molecule type" value="protein"/>
</dbReference>
<dbReference type="GO" id="GO:0005739">
    <property type="term" value="C:mitochondrion"/>
    <property type="evidence" value="ECO:0007005"/>
    <property type="project" value="SGD"/>
</dbReference>
<dbReference type="GO" id="GO:0005634">
    <property type="term" value="C:nucleus"/>
    <property type="evidence" value="ECO:0000314"/>
    <property type="project" value="SGD"/>
</dbReference>
<dbReference type="GO" id="GO:0004410">
    <property type="term" value="F:homocitrate synthase activity"/>
    <property type="evidence" value="ECO:0000314"/>
    <property type="project" value="SGD"/>
</dbReference>
<dbReference type="GO" id="GO:0046872">
    <property type="term" value="F:metal ion binding"/>
    <property type="evidence" value="ECO:0007669"/>
    <property type="project" value="UniProtKB-KW"/>
</dbReference>
<dbReference type="GO" id="GO:0006281">
    <property type="term" value="P:DNA repair"/>
    <property type="evidence" value="ECO:0000316"/>
    <property type="project" value="SGD"/>
</dbReference>
<dbReference type="GO" id="GO:0019878">
    <property type="term" value="P:lysine biosynthetic process via aminoadipic acid"/>
    <property type="evidence" value="ECO:0000316"/>
    <property type="project" value="SGD"/>
</dbReference>
<dbReference type="CDD" id="cd07948">
    <property type="entry name" value="DRE_TIM_HCS"/>
    <property type="match status" value="1"/>
</dbReference>
<dbReference type="FunFam" id="1.10.238.260:FF:000002">
    <property type="entry name" value="Homocitrate synthase, mitochondrial"/>
    <property type="match status" value="1"/>
</dbReference>
<dbReference type="FunFam" id="3.20.20.70:FF:000032">
    <property type="entry name" value="Homocitrate synthase, mitochondrial"/>
    <property type="match status" value="1"/>
</dbReference>
<dbReference type="Gene3D" id="1.10.238.260">
    <property type="match status" value="1"/>
</dbReference>
<dbReference type="Gene3D" id="3.20.20.70">
    <property type="entry name" value="Aldolase class I"/>
    <property type="match status" value="1"/>
</dbReference>
<dbReference type="HAMAP" id="MF_02222">
    <property type="entry name" value="Homocitr_synth_fung_arch"/>
    <property type="match status" value="1"/>
</dbReference>
<dbReference type="InterPro" id="IPR050073">
    <property type="entry name" value="2-IPM_HCS-like"/>
</dbReference>
<dbReference type="InterPro" id="IPR002034">
    <property type="entry name" value="AIPM/Hcit_synth_CS"/>
</dbReference>
<dbReference type="InterPro" id="IPR013785">
    <property type="entry name" value="Aldolase_TIM"/>
</dbReference>
<dbReference type="InterPro" id="IPR048253">
    <property type="entry name" value="DRE_TIM_HCS_fun_bact"/>
</dbReference>
<dbReference type="InterPro" id="IPR011872">
    <property type="entry name" value="Homocitrate_synth"/>
</dbReference>
<dbReference type="InterPro" id="IPR054691">
    <property type="entry name" value="LeuA/HCS_post-cat"/>
</dbReference>
<dbReference type="InterPro" id="IPR000891">
    <property type="entry name" value="PYR_CT"/>
</dbReference>
<dbReference type="NCBIfam" id="TIGR02146">
    <property type="entry name" value="LysS_fung_arch"/>
    <property type="match status" value="1"/>
</dbReference>
<dbReference type="PANTHER" id="PTHR10277:SF48">
    <property type="entry name" value="HOMOCITRATE SYNTHASE, CYTOSOLIC ISOZYME-RELATED"/>
    <property type="match status" value="1"/>
</dbReference>
<dbReference type="PANTHER" id="PTHR10277">
    <property type="entry name" value="HOMOCITRATE SYNTHASE-RELATED"/>
    <property type="match status" value="1"/>
</dbReference>
<dbReference type="Pfam" id="PF22617">
    <property type="entry name" value="HCS_D2"/>
    <property type="match status" value="1"/>
</dbReference>
<dbReference type="Pfam" id="PF00682">
    <property type="entry name" value="HMGL-like"/>
    <property type="match status" value="1"/>
</dbReference>
<dbReference type="SUPFAM" id="SSF51569">
    <property type="entry name" value="Aldolase"/>
    <property type="match status" value="1"/>
</dbReference>
<dbReference type="PROSITE" id="PS00815">
    <property type="entry name" value="AIPM_HOMOCIT_SYNTH_1"/>
    <property type="match status" value="1"/>
</dbReference>
<dbReference type="PROSITE" id="PS00816">
    <property type="entry name" value="AIPM_HOMOCIT_SYNTH_2"/>
    <property type="match status" value="1"/>
</dbReference>
<dbReference type="PROSITE" id="PS50991">
    <property type="entry name" value="PYR_CT"/>
    <property type="match status" value="1"/>
</dbReference>
<organism>
    <name type="scientific">Saccharomyces cerevisiae (strain ATCC 204508 / S288c)</name>
    <name type="common">Baker's yeast</name>
    <dbReference type="NCBI Taxonomy" id="559292"/>
    <lineage>
        <taxon>Eukaryota</taxon>
        <taxon>Fungi</taxon>
        <taxon>Dikarya</taxon>
        <taxon>Ascomycota</taxon>
        <taxon>Saccharomycotina</taxon>
        <taxon>Saccharomycetes</taxon>
        <taxon>Saccharomycetales</taxon>
        <taxon>Saccharomycetaceae</taxon>
        <taxon>Saccharomyces</taxon>
    </lineage>
</organism>
<protein>
    <recommendedName>
        <fullName>Homocitrate synthase, cytosolic isozyme</fullName>
        <shortName>HCS</shortName>
        <ecNumber evidence="1">2.3.3.14</ecNumber>
    </recommendedName>
</protein>
<feature type="chain" id="PRO_0000140454" description="Homocitrate synthase, cytosolic isozyme">
    <location>
        <begin position="1"/>
        <end position="428"/>
    </location>
</feature>
<feature type="domain" description="Pyruvate carboxyltransferase" evidence="2">
    <location>
        <begin position="23"/>
        <end position="276"/>
    </location>
</feature>
<feature type="region of interest" description="Disordered" evidence="3">
    <location>
        <begin position="399"/>
        <end position="428"/>
    </location>
</feature>
<feature type="active site" description="Proton acceptor" evidence="1">
    <location>
        <position position="309"/>
    </location>
</feature>
<feature type="binding site" evidence="1">
    <location>
        <position position="31"/>
    </location>
    <ligand>
        <name>2-oxoglutarate</name>
        <dbReference type="ChEBI" id="CHEBI:16810"/>
    </ligand>
</feature>
<feature type="binding site" evidence="1">
    <location>
        <position position="32"/>
    </location>
    <ligand>
        <name>Mg(2+)</name>
        <dbReference type="ChEBI" id="CHEBI:18420"/>
    </ligand>
</feature>
<feature type="binding site" evidence="1">
    <location>
        <position position="91"/>
    </location>
    <ligand>
        <name>2-oxoglutarate</name>
        <dbReference type="ChEBI" id="CHEBI:16810"/>
    </ligand>
</feature>
<feature type="binding site" evidence="1">
    <location>
        <position position="151"/>
    </location>
    <ligand>
        <name>2-oxoglutarate</name>
        <dbReference type="ChEBI" id="CHEBI:16810"/>
    </ligand>
</feature>
<feature type="binding site" evidence="1">
    <location>
        <position position="185"/>
    </location>
    <ligand>
        <name>2-oxoglutarate</name>
        <dbReference type="ChEBI" id="CHEBI:16810"/>
    </ligand>
</feature>
<feature type="binding site" evidence="1">
    <location>
        <position position="212"/>
    </location>
    <ligand>
        <name>Mg(2+)</name>
        <dbReference type="ChEBI" id="CHEBI:18420"/>
    </ligand>
</feature>
<feature type="binding site" evidence="1">
    <location>
        <position position="214"/>
    </location>
    <ligand>
        <name>Mg(2+)</name>
        <dbReference type="ChEBI" id="CHEBI:18420"/>
    </ligand>
</feature>
<feature type="modified residue" description="Phosphoserine" evidence="8">
    <location>
        <position position="385"/>
    </location>
</feature>
<feature type="modified residue" description="Phosphothreonine" evidence="7 8">
    <location>
        <position position="396"/>
    </location>
</feature>
<feature type="modified residue" description="Phosphoserine" evidence="6">
    <location>
        <position position="401"/>
    </location>
</feature>
<feature type="modified residue" description="Phosphoserine" evidence="8">
    <location>
        <position position="410"/>
    </location>
</feature>
<comment type="function">
    <text evidence="1">Catalyzes the aldol-type condensation of 2-oxoglutarate with acetyl-CoA to yield homocitrate. Carries out the first step of the alpha-aminoadipate (AAA) lysine biosynthesis pathway.</text>
</comment>
<comment type="catalytic activity">
    <reaction evidence="1">
        <text>acetyl-CoA + 2-oxoglutarate + H2O = (2R)-homocitrate + CoA + H(+)</text>
        <dbReference type="Rhea" id="RHEA:12929"/>
        <dbReference type="ChEBI" id="CHEBI:15377"/>
        <dbReference type="ChEBI" id="CHEBI:15378"/>
        <dbReference type="ChEBI" id="CHEBI:16810"/>
        <dbReference type="ChEBI" id="CHEBI:57287"/>
        <dbReference type="ChEBI" id="CHEBI:57288"/>
        <dbReference type="ChEBI" id="CHEBI:58884"/>
        <dbReference type="EC" id="2.3.3.14"/>
    </reaction>
    <physiologicalReaction direction="left-to-right" evidence="1">
        <dbReference type="Rhea" id="RHEA:12930"/>
    </physiologicalReaction>
</comment>
<comment type="cofactor">
    <cofactor evidence="1">
        <name>Mg(2+)</name>
        <dbReference type="ChEBI" id="CHEBI:18420"/>
    </cofactor>
    <cofactor evidence="1">
        <name>Mn(2+)</name>
        <dbReference type="ChEBI" id="CHEBI:29035"/>
    </cofactor>
</comment>
<comment type="pathway">
    <text evidence="1">Amino-acid biosynthesis; L-lysine biosynthesis via AAA pathway; L-alpha-aminoadipate from 2-oxoglutarate: step 1/5.</text>
</comment>
<comment type="interaction">
    <interactant intactId="EBI-8502">
        <id>P48570</id>
    </interactant>
    <interactant intactId="EBI-8508">
        <id>Q12122</id>
        <label>LYS21</label>
    </interactant>
    <organismsDiffer>false</organismsDiffer>
    <experiments>3</experiments>
</comment>
<comment type="subcellular location">
    <subcellularLocation>
        <location>Cytoplasm</location>
    </subcellularLocation>
</comment>
<comment type="miscellaneous">
    <text evidence="4">Present with 28100 molecules/cell in log phase SD medium.</text>
</comment>
<comment type="similarity">
    <text evidence="5">Belongs to the alpha-IPM synthase/homocitrate synthase family. Homocitrate synthase LYS20/LYS21 subfamily.</text>
</comment>